<feature type="chain" id="PRO_0000165330" description="Uncharacterized 14.9 kDa protein in rep-hol intergenic region">
    <location>
        <begin position="1"/>
        <end position="133"/>
    </location>
</feature>
<proteinExistence type="predicted"/>
<sequence>MLYPICIEKVNDGYVVSVPDVPGCFSAGDTLSEAMLNAKEAISFHIEGMLEDDEELPKSNPIEQYINQPEYKDFIVTVVDVDLTHLMGKAEKINITVPALLLHRIDQFIATHPEYKNRSNFLSQLATNRLLSA</sequence>
<organism>
    <name type="scientific">Haemophilus phage HP1 (strain HP1c1)</name>
    <name type="common">Bacteriophage HP1</name>
    <dbReference type="NCBI Taxonomy" id="1289570"/>
    <lineage>
        <taxon>Viruses</taxon>
        <taxon>Duplodnaviria</taxon>
        <taxon>Heunggongvirae</taxon>
        <taxon>Uroviricota</taxon>
        <taxon>Caudoviricetes</taxon>
        <taxon>Peduoviridae</taxon>
        <taxon>Hpunavirus</taxon>
        <taxon>Haemophilus phage HP1</taxon>
    </lineage>
</organism>
<organismHost>
    <name type="scientific">Haemophilus influenzae</name>
    <dbReference type="NCBI Taxonomy" id="727"/>
</organismHost>
<evidence type="ECO:0000305" key="1"/>
<dbReference type="EMBL" id="U24159">
    <property type="protein sequence ID" value="AAB09199.1"/>
    <property type="molecule type" value="Genomic_DNA"/>
</dbReference>
<dbReference type="PIR" id="S69520">
    <property type="entry name" value="S69520"/>
</dbReference>
<dbReference type="RefSeq" id="NP_043483.1">
    <property type="nucleotide sequence ID" value="NC_001697.1"/>
</dbReference>
<dbReference type="SMR" id="P51716"/>
<dbReference type="GeneID" id="1261114"/>
<dbReference type="KEGG" id="vg:1261114"/>
<dbReference type="Proteomes" id="UP000001713">
    <property type="component" value="Segment"/>
</dbReference>
<dbReference type="Gene3D" id="3.30.160.250">
    <property type="match status" value="1"/>
</dbReference>
<dbReference type="InterPro" id="IPR031807">
    <property type="entry name" value="HicB-like"/>
</dbReference>
<dbReference type="InterPro" id="IPR051404">
    <property type="entry name" value="TA_system_antitoxin"/>
</dbReference>
<dbReference type="InterPro" id="IPR035069">
    <property type="entry name" value="TTHA1013/TTHA0281-like"/>
</dbReference>
<dbReference type="PANTHER" id="PTHR34504">
    <property type="entry name" value="ANTITOXIN HICB"/>
    <property type="match status" value="1"/>
</dbReference>
<dbReference type="PANTHER" id="PTHR34504:SF2">
    <property type="entry name" value="UPF0150 PROTEIN SSL0259"/>
    <property type="match status" value="1"/>
</dbReference>
<dbReference type="Pfam" id="PF15919">
    <property type="entry name" value="HicB_lk_antitox"/>
    <property type="match status" value="1"/>
</dbReference>
<dbReference type="SUPFAM" id="SSF143100">
    <property type="entry name" value="TTHA1013/TTHA0281-like"/>
    <property type="match status" value="1"/>
</dbReference>
<accession>P51716</accession>
<name>YO14_BPHC1</name>
<comment type="similarity">
    <text evidence="1">To E.coli ydcQ.</text>
</comment>
<keyword id="KW-1185">Reference proteome</keyword>
<protein>
    <recommendedName>
        <fullName>Uncharacterized 14.9 kDa protein in rep-hol intergenic region</fullName>
    </recommendedName>
    <alternativeName>
        <fullName>ORF14</fullName>
    </alternativeName>
</protein>
<reference key="1">
    <citation type="journal article" date="1996" name="Nucleic Acids Res.">
        <title>The complete nucleotide sequence of bacteriophage HP1 DNA.</title>
        <authorList>
            <person name="Esposito D."/>
            <person name="Fitzmaurice W.P."/>
            <person name="Benjamin R.C."/>
            <person name="Goodman S.D."/>
            <person name="Waldman A.S."/>
            <person name="Scocca J.J."/>
        </authorList>
    </citation>
    <scope>NUCLEOTIDE SEQUENCE [LARGE SCALE GENOMIC DNA]</scope>
</reference>